<comment type="function">
    <text evidence="5 6">Protein O-glucosyltransferase. Catalyzes the reaction that attaches glucose through an O-glycosidic linkage to a conserved serine residue found in the consensus sequence C-X-S-X-[PA]-C in epidermal growth factor-like repeats (PubMed:27428513). Regulates Notch signaling by glucosylating Notch in the ER, glucosylation is required for the correct folding and cleavage of Notch.</text>
</comment>
<comment type="pathway">
    <text evidence="6">Protein modification; protein glycosylation.</text>
</comment>
<comment type="subcellular location">
    <subcellularLocation>
        <location evidence="2 5">Endoplasmic reticulum lumen</location>
    </subcellularLocation>
</comment>
<comment type="developmental stage">
    <text evidence="5">Expressed both maternally and zygotically.</text>
</comment>
<comment type="disruption phenotype">
    <text evidence="5 7">Flies exhibit a temperature-dependent loss of Notch signaling, resulting in bristle loss (PubMed:18243100). Defects in muscle development (PubMed:27807076).</text>
</comment>
<comment type="similarity">
    <text evidence="8">Belongs to the glycosyltransferase 90 family.</text>
</comment>
<protein>
    <recommendedName>
        <fullName>O-glucosyltransferase rumi</fullName>
        <ecNumber evidence="5 6">2.4.1.-</ecNumber>
    </recommendedName>
</protein>
<keyword id="KW-0002">3D-structure</keyword>
<keyword id="KW-1015">Disulfide bond</keyword>
<keyword id="KW-0256">Endoplasmic reticulum</keyword>
<keyword id="KW-0328">Glycosyltransferase</keyword>
<keyword id="KW-0914">Notch signaling pathway</keyword>
<keyword id="KW-1185">Reference proteome</keyword>
<keyword id="KW-0732">Signal</keyword>
<keyword id="KW-0808">Transferase</keyword>
<reference evidence="10" key="1">
    <citation type="journal article" date="2000" name="Science">
        <title>The genome sequence of Drosophila melanogaster.</title>
        <authorList>
            <person name="Adams M.D."/>
            <person name="Celniker S.E."/>
            <person name="Holt R.A."/>
            <person name="Evans C.A."/>
            <person name="Gocayne J.D."/>
            <person name="Amanatides P.G."/>
            <person name="Scherer S.E."/>
            <person name="Li P.W."/>
            <person name="Hoskins R.A."/>
            <person name="Galle R.F."/>
            <person name="George R.A."/>
            <person name="Lewis S.E."/>
            <person name="Richards S."/>
            <person name="Ashburner M."/>
            <person name="Henderson S.N."/>
            <person name="Sutton G.G."/>
            <person name="Wortman J.R."/>
            <person name="Yandell M.D."/>
            <person name="Zhang Q."/>
            <person name="Chen L.X."/>
            <person name="Brandon R.C."/>
            <person name="Rogers Y.-H.C."/>
            <person name="Blazej R.G."/>
            <person name="Champe M."/>
            <person name="Pfeiffer B.D."/>
            <person name="Wan K.H."/>
            <person name="Doyle C."/>
            <person name="Baxter E.G."/>
            <person name="Helt G."/>
            <person name="Nelson C.R."/>
            <person name="Miklos G.L.G."/>
            <person name="Abril J.F."/>
            <person name="Agbayani A."/>
            <person name="An H.-J."/>
            <person name="Andrews-Pfannkoch C."/>
            <person name="Baldwin D."/>
            <person name="Ballew R.M."/>
            <person name="Basu A."/>
            <person name="Baxendale J."/>
            <person name="Bayraktaroglu L."/>
            <person name="Beasley E.M."/>
            <person name="Beeson K.Y."/>
            <person name="Benos P.V."/>
            <person name="Berman B.P."/>
            <person name="Bhandari D."/>
            <person name="Bolshakov S."/>
            <person name="Borkova D."/>
            <person name="Botchan M.R."/>
            <person name="Bouck J."/>
            <person name="Brokstein P."/>
            <person name="Brottier P."/>
            <person name="Burtis K.C."/>
            <person name="Busam D.A."/>
            <person name="Butler H."/>
            <person name="Cadieu E."/>
            <person name="Center A."/>
            <person name="Chandra I."/>
            <person name="Cherry J.M."/>
            <person name="Cawley S."/>
            <person name="Dahlke C."/>
            <person name="Davenport L.B."/>
            <person name="Davies P."/>
            <person name="de Pablos B."/>
            <person name="Delcher A."/>
            <person name="Deng Z."/>
            <person name="Mays A.D."/>
            <person name="Dew I."/>
            <person name="Dietz S.M."/>
            <person name="Dodson K."/>
            <person name="Doup L.E."/>
            <person name="Downes M."/>
            <person name="Dugan-Rocha S."/>
            <person name="Dunkov B.C."/>
            <person name="Dunn P."/>
            <person name="Durbin K.J."/>
            <person name="Evangelista C.C."/>
            <person name="Ferraz C."/>
            <person name="Ferriera S."/>
            <person name="Fleischmann W."/>
            <person name="Fosler C."/>
            <person name="Gabrielian A.E."/>
            <person name="Garg N.S."/>
            <person name="Gelbart W.M."/>
            <person name="Glasser K."/>
            <person name="Glodek A."/>
            <person name="Gong F."/>
            <person name="Gorrell J.H."/>
            <person name="Gu Z."/>
            <person name="Guan P."/>
            <person name="Harris M."/>
            <person name="Harris N.L."/>
            <person name="Harvey D.A."/>
            <person name="Heiman T.J."/>
            <person name="Hernandez J.R."/>
            <person name="Houck J."/>
            <person name="Hostin D."/>
            <person name="Houston K.A."/>
            <person name="Howland T.J."/>
            <person name="Wei M.-H."/>
            <person name="Ibegwam C."/>
            <person name="Jalali M."/>
            <person name="Kalush F."/>
            <person name="Karpen G.H."/>
            <person name="Ke Z."/>
            <person name="Kennison J.A."/>
            <person name="Ketchum K.A."/>
            <person name="Kimmel B.E."/>
            <person name="Kodira C.D."/>
            <person name="Kraft C.L."/>
            <person name="Kravitz S."/>
            <person name="Kulp D."/>
            <person name="Lai Z."/>
            <person name="Lasko P."/>
            <person name="Lei Y."/>
            <person name="Levitsky A.A."/>
            <person name="Li J.H."/>
            <person name="Li Z."/>
            <person name="Liang Y."/>
            <person name="Lin X."/>
            <person name="Liu X."/>
            <person name="Mattei B."/>
            <person name="McIntosh T.C."/>
            <person name="McLeod M.P."/>
            <person name="McPherson D."/>
            <person name="Merkulov G."/>
            <person name="Milshina N.V."/>
            <person name="Mobarry C."/>
            <person name="Morris J."/>
            <person name="Moshrefi A."/>
            <person name="Mount S.M."/>
            <person name="Moy M."/>
            <person name="Murphy B."/>
            <person name="Murphy L."/>
            <person name="Muzny D.M."/>
            <person name="Nelson D.L."/>
            <person name="Nelson D.R."/>
            <person name="Nelson K.A."/>
            <person name="Nixon K."/>
            <person name="Nusskern D.R."/>
            <person name="Pacleb J.M."/>
            <person name="Palazzolo M."/>
            <person name="Pittman G.S."/>
            <person name="Pan S."/>
            <person name="Pollard J."/>
            <person name="Puri V."/>
            <person name="Reese M.G."/>
            <person name="Reinert K."/>
            <person name="Remington K."/>
            <person name="Saunders R.D.C."/>
            <person name="Scheeler F."/>
            <person name="Shen H."/>
            <person name="Shue B.C."/>
            <person name="Siden-Kiamos I."/>
            <person name="Simpson M."/>
            <person name="Skupski M.P."/>
            <person name="Smith T.J."/>
            <person name="Spier E."/>
            <person name="Spradling A.C."/>
            <person name="Stapleton M."/>
            <person name="Strong R."/>
            <person name="Sun E."/>
            <person name="Svirskas R."/>
            <person name="Tector C."/>
            <person name="Turner R."/>
            <person name="Venter E."/>
            <person name="Wang A.H."/>
            <person name="Wang X."/>
            <person name="Wang Z.-Y."/>
            <person name="Wassarman D.A."/>
            <person name="Weinstock G.M."/>
            <person name="Weissenbach J."/>
            <person name="Williams S.M."/>
            <person name="Woodage T."/>
            <person name="Worley K.C."/>
            <person name="Wu D."/>
            <person name="Yang S."/>
            <person name="Yao Q.A."/>
            <person name="Ye J."/>
            <person name="Yeh R.-F."/>
            <person name="Zaveri J.S."/>
            <person name="Zhan M."/>
            <person name="Zhang G."/>
            <person name="Zhao Q."/>
            <person name="Zheng L."/>
            <person name="Zheng X.H."/>
            <person name="Zhong F.N."/>
            <person name="Zhong W."/>
            <person name="Zhou X."/>
            <person name="Zhu S.C."/>
            <person name="Zhu X."/>
            <person name="Smith H.O."/>
            <person name="Gibbs R.A."/>
            <person name="Myers E.W."/>
            <person name="Rubin G.M."/>
            <person name="Venter J.C."/>
        </authorList>
    </citation>
    <scope>NUCLEOTIDE SEQUENCE [LARGE SCALE GENOMIC DNA]</scope>
    <source>
        <strain evidence="3">Berkeley</strain>
    </source>
</reference>
<reference evidence="8 10" key="2">
    <citation type="journal article" date="2002" name="Genome Biol.">
        <title>Annotation of the Drosophila melanogaster euchromatic genome: a systematic review.</title>
        <authorList>
            <person name="Misra S."/>
            <person name="Crosby M.A."/>
            <person name="Mungall C.J."/>
            <person name="Matthews B.B."/>
            <person name="Campbell K.S."/>
            <person name="Hradecky P."/>
            <person name="Huang Y."/>
            <person name="Kaminker J.S."/>
            <person name="Millburn G.H."/>
            <person name="Prochnik S.E."/>
            <person name="Smith C.D."/>
            <person name="Tupy J.L."/>
            <person name="Whitfield E.J."/>
            <person name="Bayraktaroglu L."/>
            <person name="Berman B.P."/>
            <person name="Bettencourt B.R."/>
            <person name="Celniker S.E."/>
            <person name="de Grey A.D.N.J."/>
            <person name="Drysdale R.A."/>
            <person name="Harris N.L."/>
            <person name="Richter J."/>
            <person name="Russo S."/>
            <person name="Schroeder A.J."/>
            <person name="Shu S.Q."/>
            <person name="Stapleton M."/>
            <person name="Yamada C."/>
            <person name="Ashburner M."/>
            <person name="Gelbart W.M."/>
            <person name="Rubin G.M."/>
            <person name="Lewis S.E."/>
        </authorList>
    </citation>
    <scope>GENOME REANNOTATION</scope>
    <source>
        <strain>Berkeley</strain>
    </source>
</reference>
<reference evidence="9" key="3">
    <citation type="journal article" date="2002" name="Genome Biol.">
        <title>A Drosophila full-length cDNA resource.</title>
        <authorList>
            <person name="Stapleton M."/>
            <person name="Carlson J.W."/>
            <person name="Brokstein P."/>
            <person name="Yu C."/>
            <person name="Champe M."/>
            <person name="George R.A."/>
            <person name="Guarin H."/>
            <person name="Kronmiller B."/>
            <person name="Pacleb J.M."/>
            <person name="Park S."/>
            <person name="Wan K.H."/>
            <person name="Rubin G.M."/>
            <person name="Celniker S.E."/>
        </authorList>
    </citation>
    <scope>NUCLEOTIDE SEQUENCE [LARGE SCALE MRNA]</scope>
    <source>
        <strain evidence="9">Berkeley</strain>
        <tissue evidence="4">Embryo</tissue>
    </source>
</reference>
<reference evidence="8" key="4">
    <citation type="journal article" date="2008" name="Cell">
        <title>Rumi is a CAP10 domain glycosyltransferase that modifies Notch and is required for Notch signaling.</title>
        <authorList>
            <person name="Acar M."/>
            <person name="Jafar-Nejad H."/>
            <person name="Takeuchi H."/>
            <person name="Rajan A."/>
            <person name="Ibrani D."/>
            <person name="Rana N.A."/>
            <person name="Pan H."/>
            <person name="Haltiwanger R.S."/>
            <person name="Bellen H.J."/>
        </authorList>
    </citation>
    <scope>FUNCTION</scope>
    <scope>SUBCELLULAR LOCATION</scope>
    <scope>DEVELOPMENTAL STAGE</scope>
    <scope>MUTAGENESIS OF GLY-189</scope>
    <scope>DISRUPTION PHENOTYPE</scope>
</reference>
<reference key="5">
    <citation type="journal article" date="2016" name="EMBO Mol. Med.">
        <title>A POGLUT1 mutation causes a muscular dystrophy with reduced Notch signaling and satellite cell loss.</title>
        <authorList>
            <person name="Servian-Morilla E."/>
            <person name="Takeuchi H."/>
            <person name="Lee T.V."/>
            <person name="Clarimon J."/>
            <person name="Mavillard F."/>
            <person name="Area-Gomez E."/>
            <person name="Rivas E."/>
            <person name="Nieto-Gonzalez J.L."/>
            <person name="Rivero M.C."/>
            <person name="Cabrera-Serrano M."/>
            <person name="Gomez-Sanchez L."/>
            <person name="Martinez-Lopez J.A."/>
            <person name="Estrada B."/>
            <person name="Marquez C."/>
            <person name="Morgado Y."/>
            <person name="Suarez-Calvet X."/>
            <person name="Pita G."/>
            <person name="Bigot A."/>
            <person name="Gallardo E."/>
            <person name="Fernandez-Chacon R."/>
            <person name="Hirano M."/>
            <person name="Haltiwanger R.S."/>
            <person name="Jafar-Nejad H."/>
            <person name="Paradas C."/>
        </authorList>
    </citation>
    <scope>DISRUPTION PHENOTYPE</scope>
    <scope>MUTAGENESIS OF GLY-189</scope>
</reference>
<reference evidence="12 13 14 15" key="6">
    <citation type="journal article" date="2016" name="Nat. Chem. Biol.">
        <title>Structural analysis of Notch-regulating Rumi reveals basis for pathogenic mutations.</title>
        <authorList>
            <person name="Yu H."/>
            <person name="Takeuchi H."/>
            <person name="Takeuchi M."/>
            <person name="Liu Q."/>
            <person name="Kantharia J."/>
            <person name="Haltiwanger R.S."/>
            <person name="Li H."/>
        </authorList>
    </citation>
    <scope>X-RAY CRYSTALLOGRAPHY (1.90 ANGSTROMS) OF 21-407 IN COMPLEXES WITH UDP; UDP-GLUCOSE AND SUBSTRATE PEPTIDES</scope>
    <scope>CATALYTIC ACTIVITY</scope>
    <scope>FUNCTION</scope>
    <scope>ACTIVE SITE</scope>
    <scope>PATHWAY</scope>
    <scope>MUTAGENESIS OF PHE-122; ALA-124; ARG-125; ASP-151; ALA-192; PRO-197; GLY-199; SER-231; THR-233; ARG-237; ARG-245; GLN-259; THR-267; SER-296 AND ARG-298</scope>
    <scope>DISULFIDE BONDS</scope>
</reference>
<organism>
    <name type="scientific">Drosophila melanogaster</name>
    <name type="common">Fruit fly</name>
    <dbReference type="NCBI Taxonomy" id="7227"/>
    <lineage>
        <taxon>Eukaryota</taxon>
        <taxon>Metazoa</taxon>
        <taxon>Ecdysozoa</taxon>
        <taxon>Arthropoda</taxon>
        <taxon>Hexapoda</taxon>
        <taxon>Insecta</taxon>
        <taxon>Pterygota</taxon>
        <taxon>Neoptera</taxon>
        <taxon>Endopterygota</taxon>
        <taxon>Diptera</taxon>
        <taxon>Brachycera</taxon>
        <taxon>Muscomorpha</taxon>
        <taxon>Ephydroidea</taxon>
        <taxon>Drosophilidae</taxon>
        <taxon>Drosophila</taxon>
        <taxon>Sophophora</taxon>
    </lineage>
</organism>
<dbReference type="EC" id="2.4.1.-" evidence="5 6"/>
<dbReference type="EMBL" id="AE014297">
    <property type="protein sequence ID" value="AAN13920.1"/>
    <property type="molecule type" value="Genomic_DNA"/>
</dbReference>
<dbReference type="EMBL" id="AY069564">
    <property type="protein sequence ID" value="AAL39709.1"/>
    <property type="molecule type" value="mRNA"/>
</dbReference>
<dbReference type="RefSeq" id="NP_651095.1">
    <property type="nucleotide sequence ID" value="NM_142838.4"/>
</dbReference>
<dbReference type="PDB" id="5F84">
    <property type="method" value="X-ray"/>
    <property type="resolution" value="2.50 A"/>
    <property type="chains" value="A=21-407"/>
</dbReference>
<dbReference type="PDB" id="5F85">
    <property type="method" value="X-ray"/>
    <property type="resolution" value="2.15 A"/>
    <property type="chains" value="A=21-407"/>
</dbReference>
<dbReference type="PDB" id="5F86">
    <property type="method" value="X-ray"/>
    <property type="resolution" value="1.90 A"/>
    <property type="chains" value="A=21-407"/>
</dbReference>
<dbReference type="PDB" id="5F87">
    <property type="method" value="X-ray"/>
    <property type="resolution" value="3.20 A"/>
    <property type="chains" value="A/B/C/D/E/F=21-407"/>
</dbReference>
<dbReference type="PDBsum" id="5F84"/>
<dbReference type="PDBsum" id="5F85"/>
<dbReference type="PDBsum" id="5F86"/>
<dbReference type="PDBsum" id="5F87"/>
<dbReference type="SMR" id="Q8T045"/>
<dbReference type="BioGRID" id="77376">
    <property type="interactions" value="6"/>
</dbReference>
<dbReference type="DIP" id="DIP-62084N"/>
<dbReference type="FunCoup" id="Q8T045">
    <property type="interactions" value="1875"/>
</dbReference>
<dbReference type="IntAct" id="Q8T045">
    <property type="interactions" value="1"/>
</dbReference>
<dbReference type="STRING" id="7227.FBpp0083713"/>
<dbReference type="CAZy" id="GT90">
    <property type="family name" value="Glycosyltransferase Family 90"/>
</dbReference>
<dbReference type="PaxDb" id="7227-FBpp0083713"/>
<dbReference type="DNASU" id="326122"/>
<dbReference type="EnsemblMetazoa" id="FBtr0084320">
    <property type="protein sequence ID" value="FBpp0083713"/>
    <property type="gene ID" value="FBgn0086253"/>
</dbReference>
<dbReference type="GeneID" id="326122"/>
<dbReference type="KEGG" id="dme:Dmel_CG31152"/>
<dbReference type="UCSC" id="CG31152-RA">
    <property type="organism name" value="d. melanogaster"/>
</dbReference>
<dbReference type="AGR" id="FB:FBgn0086253"/>
<dbReference type="CTD" id="326122"/>
<dbReference type="FlyBase" id="FBgn0086253">
    <property type="gene designation" value="rumi"/>
</dbReference>
<dbReference type="VEuPathDB" id="VectorBase:FBgn0086253"/>
<dbReference type="eggNOG" id="KOG2458">
    <property type="taxonomic scope" value="Eukaryota"/>
</dbReference>
<dbReference type="GeneTree" id="ENSGT00940000158283"/>
<dbReference type="InParanoid" id="Q8T045"/>
<dbReference type="OMA" id="EDDCMFP"/>
<dbReference type="OrthoDB" id="202415at2759"/>
<dbReference type="PhylomeDB" id="Q8T045"/>
<dbReference type="UniPathway" id="UPA00378"/>
<dbReference type="BioGRID-ORCS" id="326122">
    <property type="hits" value="0 hits in 1 CRISPR screen"/>
</dbReference>
<dbReference type="GenomeRNAi" id="326122"/>
<dbReference type="PRO" id="PR:Q8T045"/>
<dbReference type="Proteomes" id="UP000000803">
    <property type="component" value="Chromosome 3R"/>
</dbReference>
<dbReference type="Bgee" id="FBgn0086253">
    <property type="expression patterns" value="Expressed in eye disc (Drosophila) and 35 other cell types or tissues"/>
</dbReference>
<dbReference type="ExpressionAtlas" id="Q8T045">
    <property type="expression patterns" value="baseline and differential"/>
</dbReference>
<dbReference type="GO" id="GO:0012505">
    <property type="term" value="C:endomembrane system"/>
    <property type="evidence" value="ECO:0007005"/>
    <property type="project" value="FlyBase"/>
</dbReference>
<dbReference type="GO" id="GO:0005788">
    <property type="term" value="C:endoplasmic reticulum lumen"/>
    <property type="evidence" value="ECO:0000314"/>
    <property type="project" value="UniProtKB"/>
</dbReference>
<dbReference type="GO" id="GO:0140561">
    <property type="term" value="F:EGF-domain serine glucosyltransferase activity"/>
    <property type="evidence" value="ECO:0000314"/>
    <property type="project" value="FlyBase"/>
</dbReference>
<dbReference type="GO" id="GO:0140562">
    <property type="term" value="F:EGF-domain serine xylosyltransferase activity"/>
    <property type="evidence" value="ECO:0000314"/>
    <property type="project" value="FlyBase"/>
</dbReference>
<dbReference type="GO" id="GO:0046527">
    <property type="term" value="F:glucosyltransferase activity"/>
    <property type="evidence" value="ECO:0000314"/>
    <property type="project" value="GO_Central"/>
</dbReference>
<dbReference type="GO" id="GO:0035251">
    <property type="term" value="F:UDP-glucosyltransferase activity"/>
    <property type="evidence" value="ECO:0000314"/>
    <property type="project" value="UniProtKB"/>
</dbReference>
<dbReference type="GO" id="GO:0035252">
    <property type="term" value="F:UDP-xylosyltransferase activity"/>
    <property type="evidence" value="ECO:0000318"/>
    <property type="project" value="GO_Central"/>
</dbReference>
<dbReference type="GO" id="GO:0045165">
    <property type="term" value="P:cell fate commitment"/>
    <property type="evidence" value="ECO:0000315"/>
    <property type="project" value="FlyBase"/>
</dbReference>
<dbReference type="GO" id="GO:0060537">
    <property type="term" value="P:muscle tissue development"/>
    <property type="evidence" value="ECO:0000315"/>
    <property type="project" value="UniProtKB"/>
</dbReference>
<dbReference type="GO" id="GO:0045746">
    <property type="term" value="P:negative regulation of Notch signaling pathway"/>
    <property type="evidence" value="ECO:0000315"/>
    <property type="project" value="UniProtKB"/>
</dbReference>
<dbReference type="GO" id="GO:0007219">
    <property type="term" value="P:Notch signaling pathway"/>
    <property type="evidence" value="ECO:0007669"/>
    <property type="project" value="UniProtKB-KW"/>
</dbReference>
<dbReference type="GO" id="GO:0045747">
    <property type="term" value="P:positive regulation of Notch signaling pathway"/>
    <property type="evidence" value="ECO:0000315"/>
    <property type="project" value="UniProtKB"/>
</dbReference>
<dbReference type="GO" id="GO:0006493">
    <property type="term" value="P:protein O-linked glycosylation"/>
    <property type="evidence" value="ECO:0000314"/>
    <property type="project" value="FlyBase"/>
</dbReference>
<dbReference type="GO" id="GO:0018242">
    <property type="term" value="P:protein O-linked glycosylation via serine"/>
    <property type="evidence" value="ECO:0000314"/>
    <property type="project" value="UniProtKB"/>
</dbReference>
<dbReference type="GO" id="GO:0042052">
    <property type="term" value="P:rhabdomere development"/>
    <property type="evidence" value="ECO:0000315"/>
    <property type="project" value="FlyBase"/>
</dbReference>
<dbReference type="InterPro" id="IPR006598">
    <property type="entry name" value="CAP10"/>
</dbReference>
<dbReference type="InterPro" id="IPR051091">
    <property type="entry name" value="O-Glucosyltr/Glycosyltrsf_90"/>
</dbReference>
<dbReference type="PANTHER" id="PTHR12203">
    <property type="entry name" value="KDEL LYS-ASP-GLU-LEU CONTAINING - RELATED"/>
    <property type="match status" value="1"/>
</dbReference>
<dbReference type="PANTHER" id="PTHR12203:SF35">
    <property type="entry name" value="PROTEIN O-GLUCOSYLTRANSFERASE 1"/>
    <property type="match status" value="1"/>
</dbReference>
<dbReference type="Pfam" id="PF05686">
    <property type="entry name" value="Glyco_transf_90"/>
    <property type="match status" value="1"/>
</dbReference>
<dbReference type="SMART" id="SM00672">
    <property type="entry name" value="CAP10"/>
    <property type="match status" value="1"/>
</dbReference>
<dbReference type="PROSITE" id="PS00014">
    <property type="entry name" value="ER_TARGET"/>
    <property type="match status" value="1"/>
</dbReference>
<accession>Q8T045</accession>
<evidence type="ECO:0000255" key="1"/>
<evidence type="ECO:0000255" key="2">
    <source>
        <dbReference type="PROSITE-ProRule" id="PRU10138"/>
    </source>
</evidence>
<evidence type="ECO:0000269" key="3">
    <source>
    </source>
</evidence>
<evidence type="ECO:0000269" key="4">
    <source>
    </source>
</evidence>
<evidence type="ECO:0000269" key="5">
    <source>
    </source>
</evidence>
<evidence type="ECO:0000269" key="6">
    <source>
    </source>
</evidence>
<evidence type="ECO:0000269" key="7">
    <source>
    </source>
</evidence>
<evidence type="ECO:0000305" key="8"/>
<evidence type="ECO:0000312" key="9">
    <source>
        <dbReference type="EMBL" id="AAL39709.1"/>
    </source>
</evidence>
<evidence type="ECO:0000312" key="10">
    <source>
        <dbReference type="EMBL" id="AAN13920.1"/>
    </source>
</evidence>
<evidence type="ECO:0000312" key="11">
    <source>
        <dbReference type="FlyBase" id="FBgn0086253"/>
    </source>
</evidence>
<evidence type="ECO:0007744" key="12">
    <source>
        <dbReference type="PDB" id="5F84"/>
    </source>
</evidence>
<evidence type="ECO:0007744" key="13">
    <source>
        <dbReference type="PDB" id="5F85"/>
    </source>
</evidence>
<evidence type="ECO:0007744" key="14">
    <source>
        <dbReference type="PDB" id="5F86"/>
    </source>
</evidence>
<evidence type="ECO:0007744" key="15">
    <source>
        <dbReference type="PDB" id="5F87"/>
    </source>
</evidence>
<evidence type="ECO:0007829" key="16">
    <source>
        <dbReference type="PDB" id="5F86"/>
    </source>
</evidence>
<evidence type="ECO:0007829" key="17">
    <source>
        <dbReference type="PDB" id="5F87"/>
    </source>
</evidence>
<sequence length="411" mass="47735">MLINHLIVVLLISLVGTGGAEDDGLCSADQKSCAQSEPDQINEDEFSFKIRRQIEKANADYKPCSSDPQDSDCSCHANVLKRDLAPYKSTGVTRQMIESSARYGTKYKIYGHRLYRDANCMFPARCEGIEHFLLPLVATLPDMDLIINTRDYPQLNAAWGNAAGGPVFSFSKTKEYRDIMYPAWTFWAGGPATKLHPRGIGRWDQMREKLEKRAAAIPWSQKRSLGFFRGSRTSDERDSLILLSRRNPELVEAQYTKNQGWKSPKDTLDAPAADEVSFEDHCKYKYLFNFRGVAASFRLKHLFLCKSLVFHVGDEWQEFFYDQLKPWVHYVPLKSYPSQQEYEHILSFFKKNDALAQEIAQRGYDFIWEHLRMKDIKCYWRKLLKRYVKLLQYEVKPEDQLIYIGPKKDEL</sequence>
<proteinExistence type="evidence at protein level"/>
<name>RUMI_DROME</name>
<gene>
    <name evidence="11" type="primary">rumi</name>
    <name type="ORF">CG31152</name>
</gene>
<feature type="signal peptide" evidence="1">
    <location>
        <begin position="1"/>
        <end position="20"/>
    </location>
</feature>
<feature type="chain" id="PRO_0000342687" description="O-glucosyltransferase rumi" evidence="1">
    <location>
        <begin position="21"/>
        <end position="411"/>
    </location>
</feature>
<feature type="region of interest" description="Interaction with the consensus sequence C-X-S-X-[PA]-C in peptide substrates" evidence="6">
    <location>
        <begin position="192"/>
        <end position="197"/>
    </location>
</feature>
<feature type="short sequence motif" description="Prevents secretion from ER" evidence="2 5">
    <location>
        <begin position="408"/>
        <end position="411"/>
    </location>
</feature>
<feature type="active site" description="Proton donor/acceptor" evidence="6">
    <location>
        <position position="151"/>
    </location>
</feature>
<feature type="binding site" evidence="6 12 13 15">
    <location>
        <begin position="229"/>
        <end position="233"/>
    </location>
    <ligand>
        <name>UDP-alpha-D-glucose</name>
        <dbReference type="ChEBI" id="CHEBI:58885"/>
    </ligand>
</feature>
<feature type="binding site" evidence="6 12 13 15">
    <location>
        <position position="237"/>
    </location>
    <ligand>
        <name>UDP-alpha-D-glucose</name>
        <dbReference type="ChEBI" id="CHEBI:58885"/>
    </ligand>
</feature>
<feature type="binding site" evidence="6 12 13 15">
    <location>
        <begin position="276"/>
        <end position="278"/>
    </location>
    <ligand>
        <name>UDP-alpha-D-glucose</name>
        <dbReference type="ChEBI" id="CHEBI:58885"/>
    </ligand>
</feature>
<feature type="binding site" evidence="6 12 13 15">
    <location>
        <begin position="294"/>
        <end position="298"/>
    </location>
    <ligand>
        <name>UDP-alpha-D-glucose</name>
        <dbReference type="ChEBI" id="CHEBI:58885"/>
    </ligand>
</feature>
<feature type="site" description="Interaction with the consensus sequence C-X-S-X-[PA]-C in peptide substrates" evidence="6">
    <location>
        <position position="122"/>
    </location>
</feature>
<feature type="site" description="Interaction with the consensus sequence C-X-S-X-[PA]-C in peptide substrates" evidence="6">
    <location>
        <position position="232"/>
    </location>
</feature>
<feature type="site" description="Interaction with the consensus sequence C-X-S-X-[PA]-C in peptide substrates" evidence="6">
    <location>
        <position position="259"/>
    </location>
</feature>
<feature type="disulfide bond" evidence="6 12 13 14 15">
    <location>
        <begin position="64"/>
        <end position="75"/>
    </location>
</feature>
<feature type="disulfide bond" evidence="6 12 13 14 15">
    <location>
        <begin position="73"/>
        <end position="378"/>
    </location>
</feature>
<feature type="disulfide bond" evidence="6 12 13 14 15">
    <location>
        <begin position="120"/>
        <end position="126"/>
    </location>
</feature>
<feature type="disulfide bond" evidence="6 12 13 14 15">
    <location>
        <begin position="282"/>
        <end position="305"/>
    </location>
</feature>
<feature type="mutagenesis site" description="Loss of enzyme activity." evidence="6">
    <original>F</original>
    <variation>A</variation>
    <location>
        <position position="122"/>
    </location>
</feature>
<feature type="mutagenesis site" description="Slightly decreased enzyme activity." evidence="6">
    <original>A</original>
    <variation>F</variation>
    <location>
        <position position="124"/>
    </location>
</feature>
<feature type="mutagenesis site" description="Loss of enzyme activity." evidence="6">
    <original>R</original>
    <variation>A</variation>
    <location>
        <position position="125"/>
    </location>
</feature>
<feature type="mutagenesis site" description="Loss of enzyme activity." evidence="6">
    <original>D</original>
    <variation>A</variation>
    <location>
        <position position="151"/>
    </location>
</feature>
<feature type="mutagenesis site" description="In rumi-79; complete loss of enzyme activity." evidence="5 7">
    <original>G</original>
    <variation>E</variation>
    <location>
        <position position="189"/>
    </location>
</feature>
<feature type="mutagenesis site" description="Decreased enzyme activity." evidence="6">
    <original>A</original>
    <variation>F</variation>
    <location>
        <position position="192"/>
    </location>
</feature>
<feature type="mutagenesis site" description="Decreased enzyme activity." evidence="6">
    <original>P</original>
    <variation>A</variation>
    <location>
        <position position="197"/>
    </location>
</feature>
<feature type="mutagenesis site" description="Loss of enzyme activity." evidence="6">
    <original>G</original>
    <variation>A</variation>
    <location>
        <position position="199"/>
    </location>
</feature>
<feature type="mutagenesis site" description="Loss of enzyme activity." evidence="6">
    <original>S</original>
    <variation>A</variation>
    <location>
        <position position="231"/>
    </location>
</feature>
<feature type="mutagenesis site" description="Nearly complete loss of enzyme activity." evidence="6">
    <original>T</original>
    <variation>A</variation>
    <location>
        <position position="233"/>
    </location>
</feature>
<feature type="mutagenesis site" description="Loss of enzyme activity." evidence="6">
    <original>R</original>
    <variation>A</variation>
    <location>
        <position position="237"/>
    </location>
</feature>
<feature type="mutagenesis site" description="Nearly complete loss of enzyme activity." evidence="6">
    <original>R</original>
    <variation>L</variation>
    <location>
        <position position="245"/>
    </location>
</feature>
<feature type="mutagenesis site" description="Loss of enzyme activity." evidence="6">
    <original>Q</original>
    <variation>A</variation>
    <location>
        <position position="259"/>
    </location>
</feature>
<feature type="mutagenesis site" description="Nearly complete loss of enzyme activity." evidence="6">
    <original>T</original>
    <variation>I</variation>
    <location>
        <position position="267"/>
    </location>
</feature>
<feature type="mutagenesis site" description="Loss of enzyme activity." evidence="6">
    <original>S</original>
    <variation>A</variation>
    <location>
        <position position="296"/>
    </location>
</feature>
<feature type="mutagenesis site" description="Loss of enzyme activity." evidence="6">
    <original>R</original>
    <variation>A</variation>
    <location>
        <position position="298"/>
    </location>
</feature>
<feature type="mutagenesis site" description="Loss of enzyme activity." evidence="6">
    <original>R</original>
    <variation>W</variation>
    <location>
        <position position="298"/>
    </location>
</feature>
<feature type="helix" evidence="16">
    <location>
        <begin position="43"/>
        <end position="60"/>
    </location>
</feature>
<feature type="strand" evidence="16">
    <location>
        <begin position="64"/>
        <end position="67"/>
    </location>
</feature>
<feature type="helix" evidence="16">
    <location>
        <begin position="77"/>
        <end position="84"/>
    </location>
</feature>
<feature type="helix" evidence="16">
    <location>
        <begin position="85"/>
        <end position="87"/>
    </location>
</feature>
<feature type="turn" evidence="16">
    <location>
        <begin position="88"/>
        <end position="90"/>
    </location>
</feature>
<feature type="helix" evidence="16">
    <location>
        <begin position="94"/>
        <end position="100"/>
    </location>
</feature>
<feature type="helix" evidence="16">
    <location>
        <begin position="101"/>
        <end position="103"/>
    </location>
</feature>
<feature type="strand" evidence="16">
    <location>
        <begin position="104"/>
        <end position="110"/>
    </location>
</feature>
<feature type="strand" evidence="16">
    <location>
        <begin position="113"/>
        <end position="116"/>
    </location>
</feature>
<feature type="helix" evidence="16">
    <location>
        <begin position="123"/>
        <end position="133"/>
    </location>
</feature>
<feature type="helix" evidence="16">
    <location>
        <begin position="134"/>
        <end position="139"/>
    </location>
</feature>
<feature type="strand" evidence="16">
    <location>
        <begin position="143"/>
        <end position="147"/>
    </location>
</feature>
<feature type="strand" evidence="16">
    <location>
        <begin position="150"/>
        <end position="152"/>
    </location>
</feature>
<feature type="strand" evidence="16">
    <location>
        <begin position="156"/>
        <end position="159"/>
    </location>
</feature>
<feature type="strand" evidence="16">
    <location>
        <begin position="168"/>
        <end position="170"/>
    </location>
</feature>
<feature type="helix" evidence="16">
    <location>
        <begin position="184"/>
        <end position="186"/>
    </location>
</feature>
<feature type="strand" evidence="16">
    <location>
        <begin position="194"/>
        <end position="196"/>
    </location>
</feature>
<feature type="helix" evidence="16">
    <location>
        <begin position="203"/>
        <end position="216"/>
    </location>
</feature>
<feature type="helix" evidence="16">
    <location>
        <begin position="219"/>
        <end position="221"/>
    </location>
</feature>
<feature type="strand" evidence="16">
    <location>
        <begin position="222"/>
        <end position="231"/>
    </location>
</feature>
<feature type="helix" evidence="16">
    <location>
        <begin position="235"/>
        <end position="237"/>
    </location>
</feature>
<feature type="helix" evidence="16">
    <location>
        <begin position="238"/>
        <end position="246"/>
    </location>
</feature>
<feature type="turn" evidence="16">
    <location>
        <begin position="248"/>
        <end position="250"/>
    </location>
</feature>
<feature type="strand" evidence="16">
    <location>
        <begin position="251"/>
        <end position="256"/>
    </location>
</feature>
<feature type="helix" evidence="16">
    <location>
        <begin position="264"/>
        <end position="267"/>
    </location>
</feature>
<feature type="helix" evidence="16">
    <location>
        <begin position="278"/>
        <end position="281"/>
    </location>
</feature>
<feature type="strand" evidence="16">
    <location>
        <begin position="284"/>
        <end position="290"/>
    </location>
</feature>
<feature type="strand" evidence="16">
    <location>
        <begin position="293"/>
        <end position="295"/>
    </location>
</feature>
<feature type="helix" evidence="16">
    <location>
        <begin position="298"/>
        <end position="303"/>
    </location>
</feature>
<feature type="turn" evidence="16">
    <location>
        <begin position="304"/>
        <end position="306"/>
    </location>
</feature>
<feature type="strand" evidence="16">
    <location>
        <begin position="308"/>
        <end position="312"/>
    </location>
</feature>
<feature type="helix" evidence="16">
    <location>
        <begin position="321"/>
        <end position="323"/>
    </location>
</feature>
<feature type="turn" evidence="16">
    <location>
        <begin position="326"/>
        <end position="328"/>
    </location>
</feature>
<feature type="strand" evidence="16">
    <location>
        <begin position="329"/>
        <end position="333"/>
    </location>
</feature>
<feature type="strand" evidence="17">
    <location>
        <begin position="335"/>
        <end position="337"/>
    </location>
</feature>
<feature type="helix" evidence="16">
    <location>
        <begin position="339"/>
        <end position="350"/>
    </location>
</feature>
<feature type="helix" evidence="16">
    <location>
        <begin position="353"/>
        <end position="370"/>
    </location>
</feature>
<feature type="helix" evidence="16">
    <location>
        <begin position="373"/>
        <end position="388"/>
    </location>
</feature>
<feature type="strand" evidence="16">
    <location>
        <begin position="401"/>
        <end position="405"/>
    </location>
</feature>